<protein>
    <recommendedName>
        <fullName evidence="1">Cyclic pyranopterin monophosphate synthase</fullName>
        <ecNumber evidence="1">4.6.1.17</ecNumber>
    </recommendedName>
    <alternativeName>
        <fullName evidence="1">Molybdenum cofactor biosynthesis protein C</fullName>
    </alternativeName>
</protein>
<organism>
    <name type="scientific">Dinoroseobacter shibae (strain DSM 16493 / NCIMB 14021 / DFL 12)</name>
    <dbReference type="NCBI Taxonomy" id="398580"/>
    <lineage>
        <taxon>Bacteria</taxon>
        <taxon>Pseudomonadati</taxon>
        <taxon>Pseudomonadota</taxon>
        <taxon>Alphaproteobacteria</taxon>
        <taxon>Rhodobacterales</taxon>
        <taxon>Roseobacteraceae</taxon>
        <taxon>Dinoroseobacter</taxon>
    </lineage>
</organism>
<proteinExistence type="inferred from homology"/>
<feature type="chain" id="PRO_1000085671" description="Cyclic pyranopterin monophosphate synthase">
    <location>
        <begin position="1"/>
        <end position="158"/>
    </location>
</feature>
<feature type="active site" evidence="1">
    <location>
        <position position="128"/>
    </location>
</feature>
<feature type="binding site" evidence="1">
    <location>
        <begin position="75"/>
        <end position="77"/>
    </location>
    <ligand>
        <name>substrate</name>
    </ligand>
</feature>
<feature type="binding site" evidence="1">
    <location>
        <begin position="113"/>
        <end position="114"/>
    </location>
    <ligand>
        <name>substrate</name>
    </ligand>
</feature>
<evidence type="ECO:0000255" key="1">
    <source>
        <dbReference type="HAMAP-Rule" id="MF_01224"/>
    </source>
</evidence>
<sequence>MSGLTHFDAQGAAHMVDVSDKEVTDRVAIARGAVRMAPETLAMIEGGRAKKGDVLAVARLAGIMGAKKTADLIPLCHPLPITKVALELVPDADLPGVRIEATVKTSGQTGVEMEALTAVSVAALTIYDMVKAVDKAMQLTDIRLAFKDGGKSGRFEAE</sequence>
<accession>A8LMJ8</accession>
<comment type="function">
    <text evidence="1">Catalyzes the conversion of (8S)-3',8-cyclo-7,8-dihydroguanosine 5'-triphosphate to cyclic pyranopterin monophosphate (cPMP).</text>
</comment>
<comment type="catalytic activity">
    <reaction evidence="1">
        <text>(8S)-3',8-cyclo-7,8-dihydroguanosine 5'-triphosphate = cyclic pyranopterin phosphate + diphosphate</text>
        <dbReference type="Rhea" id="RHEA:49580"/>
        <dbReference type="ChEBI" id="CHEBI:33019"/>
        <dbReference type="ChEBI" id="CHEBI:59648"/>
        <dbReference type="ChEBI" id="CHEBI:131766"/>
        <dbReference type="EC" id="4.6.1.17"/>
    </reaction>
</comment>
<comment type="pathway">
    <text evidence="1">Cofactor biosynthesis; molybdopterin biosynthesis.</text>
</comment>
<comment type="subunit">
    <text evidence="1">Homohexamer; trimer of dimers.</text>
</comment>
<comment type="similarity">
    <text evidence="1">Belongs to the MoaC family.</text>
</comment>
<keyword id="KW-0456">Lyase</keyword>
<keyword id="KW-0501">Molybdenum cofactor biosynthesis</keyword>
<keyword id="KW-1185">Reference proteome</keyword>
<gene>
    <name evidence="1" type="primary">moaC</name>
    <name type="ordered locus">Dshi_1801</name>
</gene>
<name>MOAC_DINSH</name>
<reference key="1">
    <citation type="journal article" date="2010" name="ISME J.">
        <title>The complete genome sequence of the algal symbiont Dinoroseobacter shibae: a hitchhiker's guide to life in the sea.</title>
        <authorList>
            <person name="Wagner-Dobler I."/>
            <person name="Ballhausen B."/>
            <person name="Berger M."/>
            <person name="Brinkhoff T."/>
            <person name="Buchholz I."/>
            <person name="Bunk B."/>
            <person name="Cypionka H."/>
            <person name="Daniel R."/>
            <person name="Drepper T."/>
            <person name="Gerdts G."/>
            <person name="Hahnke S."/>
            <person name="Han C."/>
            <person name="Jahn D."/>
            <person name="Kalhoefer D."/>
            <person name="Kiss H."/>
            <person name="Klenk H.P."/>
            <person name="Kyrpides N."/>
            <person name="Liebl W."/>
            <person name="Liesegang H."/>
            <person name="Meincke L."/>
            <person name="Pati A."/>
            <person name="Petersen J."/>
            <person name="Piekarski T."/>
            <person name="Pommerenke C."/>
            <person name="Pradella S."/>
            <person name="Pukall R."/>
            <person name="Rabus R."/>
            <person name="Stackebrandt E."/>
            <person name="Thole S."/>
            <person name="Thompson L."/>
            <person name="Tielen P."/>
            <person name="Tomasch J."/>
            <person name="von Jan M."/>
            <person name="Wanphrut N."/>
            <person name="Wichels A."/>
            <person name="Zech H."/>
            <person name="Simon M."/>
        </authorList>
    </citation>
    <scope>NUCLEOTIDE SEQUENCE [LARGE SCALE GENOMIC DNA]</scope>
    <source>
        <strain>DSM 16493 / NCIMB 14021 / DFL 12</strain>
    </source>
</reference>
<dbReference type="EC" id="4.6.1.17" evidence="1"/>
<dbReference type="EMBL" id="CP000830">
    <property type="protein sequence ID" value="ABV93543.1"/>
    <property type="molecule type" value="Genomic_DNA"/>
</dbReference>
<dbReference type="RefSeq" id="WP_012178473.1">
    <property type="nucleotide sequence ID" value="NC_009952.1"/>
</dbReference>
<dbReference type="SMR" id="A8LMJ8"/>
<dbReference type="STRING" id="398580.Dshi_1801"/>
<dbReference type="KEGG" id="dsh:Dshi_1801"/>
<dbReference type="eggNOG" id="COG0315">
    <property type="taxonomic scope" value="Bacteria"/>
</dbReference>
<dbReference type="HOGENOM" id="CLU_074693_1_0_5"/>
<dbReference type="OrthoDB" id="9794429at2"/>
<dbReference type="UniPathway" id="UPA00344"/>
<dbReference type="Proteomes" id="UP000006833">
    <property type="component" value="Chromosome"/>
</dbReference>
<dbReference type="GO" id="GO:0061799">
    <property type="term" value="F:cyclic pyranopterin monophosphate synthase activity"/>
    <property type="evidence" value="ECO:0007669"/>
    <property type="project" value="UniProtKB-UniRule"/>
</dbReference>
<dbReference type="GO" id="GO:0006777">
    <property type="term" value="P:Mo-molybdopterin cofactor biosynthetic process"/>
    <property type="evidence" value="ECO:0007669"/>
    <property type="project" value="UniProtKB-UniRule"/>
</dbReference>
<dbReference type="CDD" id="cd01420">
    <property type="entry name" value="MoaC_PE"/>
    <property type="match status" value="1"/>
</dbReference>
<dbReference type="Gene3D" id="3.30.70.640">
    <property type="entry name" value="Molybdopterin cofactor biosynthesis C (MoaC) domain"/>
    <property type="match status" value="1"/>
</dbReference>
<dbReference type="HAMAP" id="MF_01224_B">
    <property type="entry name" value="MoaC_B"/>
    <property type="match status" value="1"/>
</dbReference>
<dbReference type="InterPro" id="IPR023045">
    <property type="entry name" value="MoaC"/>
</dbReference>
<dbReference type="InterPro" id="IPR047594">
    <property type="entry name" value="MoaC_bact/euk"/>
</dbReference>
<dbReference type="InterPro" id="IPR036522">
    <property type="entry name" value="MoaC_sf"/>
</dbReference>
<dbReference type="InterPro" id="IPR050105">
    <property type="entry name" value="MoCo_biosynth_MoaA/MoaC"/>
</dbReference>
<dbReference type="InterPro" id="IPR002820">
    <property type="entry name" value="Mopterin_CF_biosynth-C_dom"/>
</dbReference>
<dbReference type="NCBIfam" id="TIGR00581">
    <property type="entry name" value="moaC"/>
    <property type="match status" value="1"/>
</dbReference>
<dbReference type="NCBIfam" id="NF006870">
    <property type="entry name" value="PRK09364.1"/>
    <property type="match status" value="1"/>
</dbReference>
<dbReference type="PANTHER" id="PTHR22960:SF29">
    <property type="entry name" value="CYCLIC PYRANOPTERIN MONOPHOSPHATE SYNTHASE"/>
    <property type="match status" value="1"/>
</dbReference>
<dbReference type="PANTHER" id="PTHR22960">
    <property type="entry name" value="MOLYBDOPTERIN COFACTOR SYNTHESIS PROTEIN A"/>
    <property type="match status" value="1"/>
</dbReference>
<dbReference type="Pfam" id="PF01967">
    <property type="entry name" value="MoaC"/>
    <property type="match status" value="1"/>
</dbReference>
<dbReference type="SUPFAM" id="SSF55040">
    <property type="entry name" value="Molybdenum cofactor biosynthesis protein C, MoaC"/>
    <property type="match status" value="1"/>
</dbReference>